<dbReference type="EC" id="6.1.1.21" evidence="1"/>
<dbReference type="EMBL" id="CP000802">
    <property type="protein sequence ID" value="ABV06924.1"/>
    <property type="molecule type" value="Genomic_DNA"/>
</dbReference>
<dbReference type="RefSeq" id="WP_001107167.1">
    <property type="nucleotide sequence ID" value="NC_009800.1"/>
</dbReference>
<dbReference type="SMR" id="A8A320"/>
<dbReference type="GeneID" id="75206207"/>
<dbReference type="KEGG" id="ecx:EcHS_A2665"/>
<dbReference type="HOGENOM" id="CLU_025113_1_1_6"/>
<dbReference type="GO" id="GO:0005737">
    <property type="term" value="C:cytoplasm"/>
    <property type="evidence" value="ECO:0007669"/>
    <property type="project" value="UniProtKB-SubCell"/>
</dbReference>
<dbReference type="GO" id="GO:0005524">
    <property type="term" value="F:ATP binding"/>
    <property type="evidence" value="ECO:0007669"/>
    <property type="project" value="UniProtKB-UniRule"/>
</dbReference>
<dbReference type="GO" id="GO:0004821">
    <property type="term" value="F:histidine-tRNA ligase activity"/>
    <property type="evidence" value="ECO:0007669"/>
    <property type="project" value="UniProtKB-UniRule"/>
</dbReference>
<dbReference type="GO" id="GO:0006427">
    <property type="term" value="P:histidyl-tRNA aminoacylation"/>
    <property type="evidence" value="ECO:0007669"/>
    <property type="project" value="UniProtKB-UniRule"/>
</dbReference>
<dbReference type="CDD" id="cd00773">
    <property type="entry name" value="HisRS-like_core"/>
    <property type="match status" value="1"/>
</dbReference>
<dbReference type="CDD" id="cd00859">
    <property type="entry name" value="HisRS_anticodon"/>
    <property type="match status" value="1"/>
</dbReference>
<dbReference type="FunFam" id="3.30.930.10:FF:000005">
    <property type="entry name" value="Histidine--tRNA ligase"/>
    <property type="match status" value="1"/>
</dbReference>
<dbReference type="FunFam" id="3.40.50.800:FF:000007">
    <property type="entry name" value="Histidine--tRNA ligase"/>
    <property type="match status" value="1"/>
</dbReference>
<dbReference type="Gene3D" id="3.40.50.800">
    <property type="entry name" value="Anticodon-binding domain"/>
    <property type="match status" value="1"/>
</dbReference>
<dbReference type="Gene3D" id="3.30.930.10">
    <property type="entry name" value="Bira Bifunctional Protein, Domain 2"/>
    <property type="match status" value="1"/>
</dbReference>
<dbReference type="HAMAP" id="MF_00127">
    <property type="entry name" value="His_tRNA_synth"/>
    <property type="match status" value="1"/>
</dbReference>
<dbReference type="InterPro" id="IPR006195">
    <property type="entry name" value="aa-tRNA-synth_II"/>
</dbReference>
<dbReference type="InterPro" id="IPR045864">
    <property type="entry name" value="aa-tRNA-synth_II/BPL/LPL"/>
</dbReference>
<dbReference type="InterPro" id="IPR004154">
    <property type="entry name" value="Anticodon-bd"/>
</dbReference>
<dbReference type="InterPro" id="IPR036621">
    <property type="entry name" value="Anticodon-bd_dom_sf"/>
</dbReference>
<dbReference type="InterPro" id="IPR015807">
    <property type="entry name" value="His-tRNA-ligase"/>
</dbReference>
<dbReference type="InterPro" id="IPR041715">
    <property type="entry name" value="HisRS-like_core"/>
</dbReference>
<dbReference type="InterPro" id="IPR004516">
    <property type="entry name" value="HisRS/HisZ"/>
</dbReference>
<dbReference type="InterPro" id="IPR033656">
    <property type="entry name" value="HisRS_anticodon"/>
</dbReference>
<dbReference type="NCBIfam" id="TIGR00442">
    <property type="entry name" value="hisS"/>
    <property type="match status" value="1"/>
</dbReference>
<dbReference type="PANTHER" id="PTHR43707:SF1">
    <property type="entry name" value="HISTIDINE--TRNA LIGASE, MITOCHONDRIAL-RELATED"/>
    <property type="match status" value="1"/>
</dbReference>
<dbReference type="PANTHER" id="PTHR43707">
    <property type="entry name" value="HISTIDYL-TRNA SYNTHETASE"/>
    <property type="match status" value="1"/>
</dbReference>
<dbReference type="Pfam" id="PF03129">
    <property type="entry name" value="HGTP_anticodon"/>
    <property type="match status" value="1"/>
</dbReference>
<dbReference type="Pfam" id="PF13393">
    <property type="entry name" value="tRNA-synt_His"/>
    <property type="match status" value="1"/>
</dbReference>
<dbReference type="PIRSF" id="PIRSF001549">
    <property type="entry name" value="His-tRNA_synth"/>
    <property type="match status" value="1"/>
</dbReference>
<dbReference type="SUPFAM" id="SSF52954">
    <property type="entry name" value="Class II aaRS ABD-related"/>
    <property type="match status" value="1"/>
</dbReference>
<dbReference type="SUPFAM" id="SSF55681">
    <property type="entry name" value="Class II aaRS and biotin synthetases"/>
    <property type="match status" value="1"/>
</dbReference>
<dbReference type="PROSITE" id="PS50862">
    <property type="entry name" value="AA_TRNA_LIGASE_II"/>
    <property type="match status" value="1"/>
</dbReference>
<comment type="catalytic activity">
    <reaction evidence="1">
        <text>tRNA(His) + L-histidine + ATP = L-histidyl-tRNA(His) + AMP + diphosphate + H(+)</text>
        <dbReference type="Rhea" id="RHEA:17313"/>
        <dbReference type="Rhea" id="RHEA-COMP:9665"/>
        <dbReference type="Rhea" id="RHEA-COMP:9689"/>
        <dbReference type="ChEBI" id="CHEBI:15378"/>
        <dbReference type="ChEBI" id="CHEBI:30616"/>
        <dbReference type="ChEBI" id="CHEBI:33019"/>
        <dbReference type="ChEBI" id="CHEBI:57595"/>
        <dbReference type="ChEBI" id="CHEBI:78442"/>
        <dbReference type="ChEBI" id="CHEBI:78527"/>
        <dbReference type="ChEBI" id="CHEBI:456215"/>
        <dbReference type="EC" id="6.1.1.21"/>
    </reaction>
</comment>
<comment type="subunit">
    <text evidence="1">Homodimer.</text>
</comment>
<comment type="subcellular location">
    <subcellularLocation>
        <location evidence="1">Cytoplasm</location>
    </subcellularLocation>
</comment>
<comment type="similarity">
    <text evidence="1">Belongs to the class-II aminoacyl-tRNA synthetase family.</text>
</comment>
<reference key="1">
    <citation type="journal article" date="2008" name="J. Bacteriol.">
        <title>The pangenome structure of Escherichia coli: comparative genomic analysis of E. coli commensal and pathogenic isolates.</title>
        <authorList>
            <person name="Rasko D.A."/>
            <person name="Rosovitz M.J."/>
            <person name="Myers G.S.A."/>
            <person name="Mongodin E.F."/>
            <person name="Fricke W.F."/>
            <person name="Gajer P."/>
            <person name="Crabtree J."/>
            <person name="Sebaihia M."/>
            <person name="Thomson N.R."/>
            <person name="Chaudhuri R."/>
            <person name="Henderson I.R."/>
            <person name="Sperandio V."/>
            <person name="Ravel J."/>
        </authorList>
    </citation>
    <scope>NUCLEOTIDE SEQUENCE [LARGE SCALE GENOMIC DNA]</scope>
    <source>
        <strain>HS</strain>
    </source>
</reference>
<accession>A8A320</accession>
<name>SYH_ECOHS</name>
<organism>
    <name type="scientific">Escherichia coli O9:H4 (strain HS)</name>
    <dbReference type="NCBI Taxonomy" id="331112"/>
    <lineage>
        <taxon>Bacteria</taxon>
        <taxon>Pseudomonadati</taxon>
        <taxon>Pseudomonadota</taxon>
        <taxon>Gammaproteobacteria</taxon>
        <taxon>Enterobacterales</taxon>
        <taxon>Enterobacteriaceae</taxon>
        <taxon>Escherichia</taxon>
    </lineage>
</organism>
<gene>
    <name evidence="1" type="primary">hisS</name>
    <name type="ordered locus">EcHS_A2665</name>
</gene>
<keyword id="KW-0030">Aminoacyl-tRNA synthetase</keyword>
<keyword id="KW-0067">ATP-binding</keyword>
<keyword id="KW-0963">Cytoplasm</keyword>
<keyword id="KW-0436">Ligase</keyword>
<keyword id="KW-0547">Nucleotide-binding</keyword>
<keyword id="KW-0648">Protein biosynthesis</keyword>
<evidence type="ECO:0000255" key="1">
    <source>
        <dbReference type="HAMAP-Rule" id="MF_00127"/>
    </source>
</evidence>
<sequence>MAKNIQAIRGMNDYLPGETAIWQRIEGTLKNVLGSYGYSEIRLPIVEQTPLFKRAIGEVTDVVEKEMYTFEDRNGDSLTLRPEGTAGCVRAGIEHGLLYNQEQRLWYIGPMFRHERPQKGRYRQFHQLGCEVFGLQGPDIDAELIMLTARWWRALGISEHVTLELNSIGSLEARANYRDALVAFLEQHKEKLDEDCKRRMYTNPLRVLDSKNPEVQALLNDAPALGDYLDEESREHFAGLCKLLESAGIAYTVNQRLVRGLDYYNRTVFEWVTNSLGSQGTVCAGGRYDGLVEQLGGRATPAVGFAMGLERLVLLVQAVNPEFKADPVVDIYLVASGADTQSAAMALAERLRDELPGVKLMTNHGGGNFKKQFARADKWGARVAVVLGESEVANGTAVVKDLRSGEQTAVAQDSVAAHLRTLLG</sequence>
<proteinExistence type="inferred from homology"/>
<feature type="chain" id="PRO_1000057827" description="Histidine--tRNA ligase">
    <location>
        <begin position="1"/>
        <end position="424"/>
    </location>
</feature>
<protein>
    <recommendedName>
        <fullName evidence="1">Histidine--tRNA ligase</fullName>
        <ecNumber evidence="1">6.1.1.21</ecNumber>
    </recommendedName>
    <alternativeName>
        <fullName evidence="1">Histidyl-tRNA synthetase</fullName>
        <shortName evidence="1">HisRS</shortName>
    </alternativeName>
</protein>